<dbReference type="EMBL" id="BX469930">
    <property type="protein sequence ID" value="CAN87889.1"/>
    <property type="molecule type" value="Genomic_DNA"/>
</dbReference>
<dbReference type="RefSeq" id="NP_001104230.1">
    <property type="nucleotide sequence ID" value="NM_001110760.1"/>
</dbReference>
<dbReference type="SMR" id="A5PMF7"/>
<dbReference type="STRING" id="7955.ENSDARP00000117387"/>
<dbReference type="PaxDb" id="7955-ENSDARP00000117387"/>
<dbReference type="Ensembl" id="ENSDART00000143829">
    <property type="protein sequence ID" value="ENSDARP00000117387"/>
    <property type="gene ID" value="ENSDARG00000052035"/>
</dbReference>
<dbReference type="GeneID" id="567911"/>
<dbReference type="KEGG" id="dre:567911"/>
<dbReference type="AGR" id="ZFIN:ZDB-GENE-070424-115"/>
<dbReference type="CTD" id="115861"/>
<dbReference type="ZFIN" id="ZDB-GENE-070424-115">
    <property type="gene designation" value="nxnl1"/>
</dbReference>
<dbReference type="eggNOG" id="KOG2501">
    <property type="taxonomic scope" value="Eukaryota"/>
</dbReference>
<dbReference type="HOGENOM" id="CLU_116457_0_0_1"/>
<dbReference type="InParanoid" id="A5PMF7"/>
<dbReference type="OMA" id="KTMPKRW"/>
<dbReference type="OrthoDB" id="189920at2759"/>
<dbReference type="PhylomeDB" id="A5PMF7"/>
<dbReference type="TreeFam" id="TF331873"/>
<dbReference type="PRO" id="PR:A5PMF7"/>
<dbReference type="Proteomes" id="UP000000437">
    <property type="component" value="Chromosome 1"/>
</dbReference>
<dbReference type="Bgee" id="ENSDARG00000052035">
    <property type="expression patterns" value="Expressed in retina and 10 other cell types or tissues"/>
</dbReference>
<dbReference type="GO" id="GO:0001750">
    <property type="term" value="C:photoreceptor outer segment"/>
    <property type="evidence" value="ECO:0007669"/>
    <property type="project" value="UniProtKB-SubCell"/>
</dbReference>
<dbReference type="GO" id="GO:0045494">
    <property type="term" value="P:photoreceptor cell maintenance"/>
    <property type="evidence" value="ECO:0000250"/>
    <property type="project" value="UniProtKB"/>
</dbReference>
<dbReference type="Gene3D" id="3.40.30.10">
    <property type="entry name" value="Glutaredoxin"/>
    <property type="match status" value="1"/>
</dbReference>
<dbReference type="InterPro" id="IPR029520">
    <property type="entry name" value="RdCVF"/>
</dbReference>
<dbReference type="InterPro" id="IPR012336">
    <property type="entry name" value="Thioredoxin-like_fold"/>
</dbReference>
<dbReference type="InterPro" id="IPR036249">
    <property type="entry name" value="Thioredoxin-like_sf"/>
</dbReference>
<dbReference type="PANTHER" id="PTHR47109">
    <property type="entry name" value="NUCLEOREDOXIN-LIKE PROTEIN 1"/>
    <property type="match status" value="1"/>
</dbReference>
<dbReference type="PANTHER" id="PTHR47109:SF1">
    <property type="entry name" value="NUCLEOREDOXIN-LIKE PROTEIN 1"/>
    <property type="match status" value="1"/>
</dbReference>
<dbReference type="Pfam" id="PF13905">
    <property type="entry name" value="Thioredoxin_8"/>
    <property type="match status" value="1"/>
</dbReference>
<dbReference type="SUPFAM" id="SSF52833">
    <property type="entry name" value="Thioredoxin-like"/>
    <property type="match status" value="1"/>
</dbReference>
<proteinExistence type="inferred from homology"/>
<name>NXNL1_DANRE</name>
<accession>A5PMF7</accession>
<keyword id="KW-0966">Cell projection</keyword>
<keyword id="KW-1185">Reference proteome</keyword>
<feature type="chain" id="PRO_0000319545" description="Nucleoredoxin-like protein 1">
    <location>
        <begin position="1"/>
        <end position="215"/>
    </location>
</feature>
<feature type="domain" description="Thioredoxin; atypical">
    <location>
        <begin position="1"/>
        <end position="164"/>
    </location>
</feature>
<feature type="region of interest" description="Disordered" evidence="2">
    <location>
        <begin position="190"/>
        <end position="215"/>
    </location>
</feature>
<reference key="1">
    <citation type="journal article" date="2013" name="Nature">
        <title>The zebrafish reference genome sequence and its relationship to the human genome.</title>
        <authorList>
            <person name="Howe K."/>
            <person name="Clark M.D."/>
            <person name="Torroja C.F."/>
            <person name="Torrance J."/>
            <person name="Berthelot C."/>
            <person name="Muffato M."/>
            <person name="Collins J.E."/>
            <person name="Humphray S."/>
            <person name="McLaren K."/>
            <person name="Matthews L."/>
            <person name="McLaren S."/>
            <person name="Sealy I."/>
            <person name="Caccamo M."/>
            <person name="Churcher C."/>
            <person name="Scott C."/>
            <person name="Barrett J.C."/>
            <person name="Koch R."/>
            <person name="Rauch G.J."/>
            <person name="White S."/>
            <person name="Chow W."/>
            <person name="Kilian B."/>
            <person name="Quintais L.T."/>
            <person name="Guerra-Assuncao J.A."/>
            <person name="Zhou Y."/>
            <person name="Gu Y."/>
            <person name="Yen J."/>
            <person name="Vogel J.H."/>
            <person name="Eyre T."/>
            <person name="Redmond S."/>
            <person name="Banerjee R."/>
            <person name="Chi J."/>
            <person name="Fu B."/>
            <person name="Langley E."/>
            <person name="Maguire S.F."/>
            <person name="Laird G.K."/>
            <person name="Lloyd D."/>
            <person name="Kenyon E."/>
            <person name="Donaldson S."/>
            <person name="Sehra H."/>
            <person name="Almeida-King J."/>
            <person name="Loveland J."/>
            <person name="Trevanion S."/>
            <person name="Jones M."/>
            <person name="Quail M."/>
            <person name="Willey D."/>
            <person name="Hunt A."/>
            <person name="Burton J."/>
            <person name="Sims S."/>
            <person name="McLay K."/>
            <person name="Plumb B."/>
            <person name="Davis J."/>
            <person name="Clee C."/>
            <person name="Oliver K."/>
            <person name="Clark R."/>
            <person name="Riddle C."/>
            <person name="Elliot D."/>
            <person name="Threadgold G."/>
            <person name="Harden G."/>
            <person name="Ware D."/>
            <person name="Begum S."/>
            <person name="Mortimore B."/>
            <person name="Kerry G."/>
            <person name="Heath P."/>
            <person name="Phillimore B."/>
            <person name="Tracey A."/>
            <person name="Corby N."/>
            <person name="Dunn M."/>
            <person name="Johnson C."/>
            <person name="Wood J."/>
            <person name="Clark S."/>
            <person name="Pelan S."/>
            <person name="Griffiths G."/>
            <person name="Smith M."/>
            <person name="Glithero R."/>
            <person name="Howden P."/>
            <person name="Barker N."/>
            <person name="Lloyd C."/>
            <person name="Stevens C."/>
            <person name="Harley J."/>
            <person name="Holt K."/>
            <person name="Panagiotidis G."/>
            <person name="Lovell J."/>
            <person name="Beasley H."/>
            <person name="Henderson C."/>
            <person name="Gordon D."/>
            <person name="Auger K."/>
            <person name="Wright D."/>
            <person name="Collins J."/>
            <person name="Raisen C."/>
            <person name="Dyer L."/>
            <person name="Leung K."/>
            <person name="Robertson L."/>
            <person name="Ambridge K."/>
            <person name="Leongamornlert D."/>
            <person name="McGuire S."/>
            <person name="Gilderthorp R."/>
            <person name="Griffiths C."/>
            <person name="Manthravadi D."/>
            <person name="Nichol S."/>
            <person name="Barker G."/>
            <person name="Whitehead S."/>
            <person name="Kay M."/>
            <person name="Brown J."/>
            <person name="Murnane C."/>
            <person name="Gray E."/>
            <person name="Humphries M."/>
            <person name="Sycamore N."/>
            <person name="Barker D."/>
            <person name="Saunders D."/>
            <person name="Wallis J."/>
            <person name="Babbage A."/>
            <person name="Hammond S."/>
            <person name="Mashreghi-Mohammadi M."/>
            <person name="Barr L."/>
            <person name="Martin S."/>
            <person name="Wray P."/>
            <person name="Ellington A."/>
            <person name="Matthews N."/>
            <person name="Ellwood M."/>
            <person name="Woodmansey R."/>
            <person name="Clark G."/>
            <person name="Cooper J."/>
            <person name="Tromans A."/>
            <person name="Grafham D."/>
            <person name="Skuce C."/>
            <person name="Pandian R."/>
            <person name="Andrews R."/>
            <person name="Harrison E."/>
            <person name="Kimberley A."/>
            <person name="Garnett J."/>
            <person name="Fosker N."/>
            <person name="Hall R."/>
            <person name="Garner P."/>
            <person name="Kelly D."/>
            <person name="Bird C."/>
            <person name="Palmer S."/>
            <person name="Gehring I."/>
            <person name="Berger A."/>
            <person name="Dooley C.M."/>
            <person name="Ersan-Urun Z."/>
            <person name="Eser C."/>
            <person name="Geiger H."/>
            <person name="Geisler M."/>
            <person name="Karotki L."/>
            <person name="Kirn A."/>
            <person name="Konantz J."/>
            <person name="Konantz M."/>
            <person name="Oberlander M."/>
            <person name="Rudolph-Geiger S."/>
            <person name="Teucke M."/>
            <person name="Lanz C."/>
            <person name="Raddatz G."/>
            <person name="Osoegawa K."/>
            <person name="Zhu B."/>
            <person name="Rapp A."/>
            <person name="Widaa S."/>
            <person name="Langford C."/>
            <person name="Yang F."/>
            <person name="Schuster S.C."/>
            <person name="Carter N.P."/>
            <person name="Harrow J."/>
            <person name="Ning Z."/>
            <person name="Herrero J."/>
            <person name="Searle S.M."/>
            <person name="Enright A."/>
            <person name="Geisler R."/>
            <person name="Plasterk R.H."/>
            <person name="Lee C."/>
            <person name="Westerfield M."/>
            <person name="de Jong P.J."/>
            <person name="Zon L.I."/>
            <person name="Postlethwait J.H."/>
            <person name="Nusslein-Volhard C."/>
            <person name="Hubbard T.J."/>
            <person name="Roest Crollius H."/>
            <person name="Rogers J."/>
            <person name="Stemple D.L."/>
        </authorList>
    </citation>
    <scope>NUCLEOTIDE SEQUENCE [LARGE SCALE GENOMIC DNA]</scope>
    <source>
        <strain>Tuebingen</strain>
    </source>
</reference>
<evidence type="ECO:0000250" key="1">
    <source>
        <dbReference type="UniProtKB" id="Q8VC33"/>
    </source>
</evidence>
<evidence type="ECO:0000256" key="2">
    <source>
        <dbReference type="SAM" id="MobiDB-lite"/>
    </source>
</evidence>
<evidence type="ECO:0000305" key="3"/>
<gene>
    <name type="primary">nxnl1</name>
    <name type="ORF">si:ch211-114l13.8</name>
</gene>
<comment type="function">
    <text evidence="1">Plays an important role in retinal cone photoreceptor survival (By similarity). May play a role in cone cell viability, slowing down cone degeneration, does not seem to play a role in degenerating rods (By similarity).</text>
</comment>
<comment type="subcellular location">
    <subcellularLocation>
        <location evidence="1">Cell projection</location>
        <location evidence="1">Cilium</location>
        <location evidence="1">Photoreceptor outer segment</location>
    </subcellularLocation>
</comment>
<comment type="similarity">
    <text evidence="3">Belongs to the nucleoredoxin family.</text>
</comment>
<organism>
    <name type="scientific">Danio rerio</name>
    <name type="common">Zebrafish</name>
    <name type="synonym">Brachydanio rerio</name>
    <dbReference type="NCBI Taxonomy" id="7955"/>
    <lineage>
        <taxon>Eukaryota</taxon>
        <taxon>Metazoa</taxon>
        <taxon>Chordata</taxon>
        <taxon>Craniata</taxon>
        <taxon>Vertebrata</taxon>
        <taxon>Euteleostomi</taxon>
        <taxon>Actinopterygii</taxon>
        <taxon>Neopterygii</taxon>
        <taxon>Teleostei</taxon>
        <taxon>Ostariophysi</taxon>
        <taxon>Cypriniformes</taxon>
        <taxon>Danionidae</taxon>
        <taxon>Danioninae</taxon>
        <taxon>Danio</taxon>
    </lineage>
</organism>
<sequence length="215" mass="25133">MVDLFLGKVLVKNNKDRDELDTEREIILRLQNRILMLFFGSGDSEKCQDFAPTLKDFYKKLTDEFYVERSAQLVLLYISLDSSEEQQEKFLKELPKRCLFLPYEDPYRQELGVMFEVRDLPRVVVLRPDCSVLSPNAVSEICTLGTDCFRNWQEGAELIDRNFMMNEEFDEGKMRSMTDPIRRIKYKVEDEKKKKKKRDDDDDDDDGGGGGGPWG</sequence>
<protein>
    <recommendedName>
        <fullName>Nucleoredoxin-like protein 1</fullName>
    </recommendedName>
</protein>